<sequence>MNITHVPEIHRTDKQHTENLRHWRKILGIAPFVSIVFPAIMYFISDEDSFKKSLLLRFITILLPFSYSAVQYAILLHTTPYYTLNLLFLAFAAISILSITALPINEWKGDDSLIFSIVLPSLFIPPTYLLSTSCRLVPGQTAFTDTGINVLIDILILLCPLVSLVLVCKEPEYRLLSAVPFPILILARLLNDRYCPSEKSAPPTAPWRVAILVLILTSAALIYAFMMWTPIAILNGYFGLLHKLRESFLSLRPD</sequence>
<feature type="chain" id="PRO_0000223109" description="UPF0328 protein ECU01_0070/ECU01_1540/ECU02_1570/ECU04_0080/ECU08_2100">
    <location>
        <begin position="1"/>
        <end position="254"/>
    </location>
</feature>
<gene>
    <name type="ordered locus">ECU01_0070</name>
</gene>
<gene>
    <name type="ordered locus">ECU01_1540</name>
</gene>
<gene>
    <name type="ordered locus">ECU02_1570</name>
</gene>
<gene>
    <name type="ordered locus">ECU04_0080</name>
</gene>
<gene>
    <name type="ordered locus">ECU08_2100</name>
</gene>
<accession>Q8ST97</accession>
<organism>
    <name type="scientific">Encephalitozoon cuniculi (strain GB-M1)</name>
    <name type="common">Microsporidian parasite</name>
    <dbReference type="NCBI Taxonomy" id="284813"/>
    <lineage>
        <taxon>Eukaryota</taxon>
        <taxon>Fungi</taxon>
        <taxon>Fungi incertae sedis</taxon>
        <taxon>Microsporidia</taxon>
        <taxon>Unikaryonidae</taxon>
        <taxon>Encephalitozoon</taxon>
    </lineage>
</organism>
<evidence type="ECO:0000305" key="1"/>
<dbReference type="EMBL" id="AL391737">
    <property type="protein sequence ID" value="CAD24879.1"/>
    <property type="molecule type" value="Genomic_DNA"/>
</dbReference>
<dbReference type="EMBL" id="AL391737">
    <property type="protein sequence ID" value="CAD25025.1"/>
    <property type="molecule type" value="Genomic_DNA"/>
</dbReference>
<dbReference type="EMBL" id="AL590442">
    <property type="protein sequence ID" value="CAD25186.1"/>
    <property type="molecule type" value="Genomic_DNA"/>
</dbReference>
<dbReference type="EMBL" id="AL590444">
    <property type="protein sequence ID" value="CAD25195.1"/>
    <property type="molecule type" value="Genomic_DNA"/>
</dbReference>
<dbReference type="EMBL" id="AL590448">
    <property type="protein sequence ID" value="CAD26512.1"/>
    <property type="molecule type" value="Genomic_DNA"/>
</dbReference>
<dbReference type="RefSeq" id="NP_001402095.1">
    <property type="nucleotide sequence ID" value="NM_001415593.1"/>
</dbReference>
<dbReference type="RefSeq" id="NP_584682.1">
    <property type="nucleotide sequence ID" value="NM_001040871.1"/>
</dbReference>
<dbReference type="RefSeq" id="NP_584691.1">
    <property type="nucleotide sequence ID" value="NM_001041041.1"/>
</dbReference>
<dbReference type="RefSeq" id="NP_597336.1">
    <property type="nucleotide sequence ID" value="NM_001041945.1"/>
</dbReference>
<dbReference type="RefSeq" id="XP_965844.1">
    <property type="nucleotide sequence ID" value="XM_960751.1"/>
</dbReference>
<dbReference type="RefSeq" id="XP_965990.1">
    <property type="nucleotide sequence ID" value="XM_960897.1"/>
</dbReference>
<dbReference type="GeneID" id="858672"/>
<dbReference type="GeneID" id="858839"/>
<dbReference type="GeneID" id="859758"/>
<dbReference type="GeneID" id="860180"/>
<dbReference type="KEGG" id="ecu:ECU02_1570"/>
<dbReference type="KEGG" id="ecu:ECU04_0080"/>
<dbReference type="KEGG" id="ecu:ECU08_2100"/>
<dbReference type="VEuPathDB" id="MicrosporidiaDB:ECU01_0070"/>
<dbReference type="VEuPathDB" id="MicrosporidiaDB:ECU01_1540"/>
<dbReference type="VEuPathDB" id="MicrosporidiaDB:ECU02_1570"/>
<dbReference type="VEuPathDB" id="MicrosporidiaDB:ECU04_0080"/>
<dbReference type="VEuPathDB" id="MicrosporidiaDB:ECU08_2100"/>
<dbReference type="HOGENOM" id="CLU_059413_0_0_1"/>
<dbReference type="InParanoid" id="Q8ST97"/>
<dbReference type="Proteomes" id="UP000000819">
    <property type="component" value="Chromosome I"/>
</dbReference>
<dbReference type="Proteomes" id="UP000000819">
    <property type="component" value="Chromosome II"/>
</dbReference>
<dbReference type="Proteomes" id="UP000000819">
    <property type="component" value="Chromosome IV"/>
</dbReference>
<dbReference type="Proteomes" id="UP000000819">
    <property type="component" value="Chromosome VIII"/>
</dbReference>
<dbReference type="InterPro" id="IPR019081">
    <property type="entry name" value="UPF0328"/>
</dbReference>
<dbReference type="Pfam" id="PF09591">
    <property type="entry name" value="DUF2463"/>
    <property type="match status" value="1"/>
</dbReference>
<protein>
    <recommendedName>
        <fullName>UPF0328 protein ECU01_0070/ECU01_1540/ECU02_1570/ECU04_0080/ECU08_2100</fullName>
    </recommendedName>
</protein>
<keyword id="KW-1185">Reference proteome</keyword>
<reference key="1">
    <citation type="journal article" date="2001" name="Genome Res.">
        <title>Sequence and analysis of chromosome I of the amitochondriate intracellular parasite Encephalitozoon cuniculi (Microspora).</title>
        <authorList>
            <person name="Peyret P."/>
            <person name="Katinka M.D."/>
            <person name="Duprat S."/>
            <person name="Duffieux F."/>
            <person name="Barbe V."/>
            <person name="Barbazanges M."/>
            <person name="Weissenbach J."/>
            <person name="Saurin W."/>
            <person name="Vivares C.P."/>
        </authorList>
    </citation>
    <scope>NUCLEOTIDE SEQUENCE [LARGE SCALE GENOMIC DNA]</scope>
    <source>
        <strain>GB-M1</strain>
    </source>
</reference>
<reference key="2">
    <citation type="journal article" date="2001" name="Nature">
        <title>Genome sequence and gene compaction of the eukaryote parasite Encephalitozoon cuniculi.</title>
        <authorList>
            <person name="Katinka M.D."/>
            <person name="Duprat S."/>
            <person name="Cornillot E."/>
            <person name="Metenier G."/>
            <person name="Thomarat F."/>
            <person name="Prensier G."/>
            <person name="Barbe V."/>
            <person name="Peyretaillade E."/>
            <person name="Brottier P."/>
            <person name="Wincker P."/>
            <person name="Delbac F."/>
            <person name="El Alaoui H."/>
            <person name="Peyret P."/>
            <person name="Saurin W."/>
            <person name="Gouy M."/>
            <person name="Weissenbach J."/>
            <person name="Vivares C.P."/>
        </authorList>
    </citation>
    <scope>NUCLEOTIDE SEQUENCE [LARGE SCALE GENOMIC DNA]</scope>
    <source>
        <strain>GB-M1</strain>
    </source>
</reference>
<proteinExistence type="inferred from homology"/>
<name>Y107_ENCCU</name>
<comment type="similarity">
    <text evidence="1">Belongs to the UPF0328 family.</text>
</comment>